<accession>Q7MYG0</accession>
<comment type="function">
    <text evidence="1">One of the primary rRNA binding proteins, it binds specifically to the 5'-end of 16S ribosomal RNA.</text>
</comment>
<comment type="subunit">
    <text evidence="1">Part of the 30S ribosomal subunit.</text>
</comment>
<comment type="similarity">
    <text evidence="1">Belongs to the universal ribosomal protein uS17 family.</text>
</comment>
<keyword id="KW-1185">Reference proteome</keyword>
<keyword id="KW-0687">Ribonucleoprotein</keyword>
<keyword id="KW-0689">Ribosomal protein</keyword>
<keyword id="KW-0694">RNA-binding</keyword>
<keyword id="KW-0699">rRNA-binding</keyword>
<protein>
    <recommendedName>
        <fullName evidence="1">Small ribosomal subunit protein uS17</fullName>
    </recommendedName>
    <alternativeName>
        <fullName evidence="2">30S ribosomal protein S17</fullName>
    </alternativeName>
</protein>
<gene>
    <name evidence="1" type="primary">rpsQ</name>
    <name type="ordered locus">plu4717</name>
</gene>
<evidence type="ECO:0000255" key="1">
    <source>
        <dbReference type="HAMAP-Rule" id="MF_01345"/>
    </source>
</evidence>
<evidence type="ECO:0000305" key="2"/>
<dbReference type="EMBL" id="BX571874">
    <property type="protein sequence ID" value="CAE17089.1"/>
    <property type="molecule type" value="Genomic_DNA"/>
</dbReference>
<dbReference type="RefSeq" id="WP_011148786.1">
    <property type="nucleotide sequence ID" value="NC_005126.1"/>
</dbReference>
<dbReference type="SMR" id="Q7MYG0"/>
<dbReference type="STRING" id="243265.plu4717"/>
<dbReference type="GeneID" id="88808149"/>
<dbReference type="KEGG" id="plu:plu4717"/>
<dbReference type="eggNOG" id="COG0186">
    <property type="taxonomic scope" value="Bacteria"/>
</dbReference>
<dbReference type="HOGENOM" id="CLU_073626_1_1_6"/>
<dbReference type="OrthoDB" id="9811714at2"/>
<dbReference type="Proteomes" id="UP000002514">
    <property type="component" value="Chromosome"/>
</dbReference>
<dbReference type="GO" id="GO:0022627">
    <property type="term" value="C:cytosolic small ribosomal subunit"/>
    <property type="evidence" value="ECO:0007669"/>
    <property type="project" value="TreeGrafter"/>
</dbReference>
<dbReference type="GO" id="GO:0019843">
    <property type="term" value="F:rRNA binding"/>
    <property type="evidence" value="ECO:0007669"/>
    <property type="project" value="UniProtKB-UniRule"/>
</dbReference>
<dbReference type="GO" id="GO:0003735">
    <property type="term" value="F:structural constituent of ribosome"/>
    <property type="evidence" value="ECO:0007669"/>
    <property type="project" value="InterPro"/>
</dbReference>
<dbReference type="GO" id="GO:0006412">
    <property type="term" value="P:translation"/>
    <property type="evidence" value="ECO:0007669"/>
    <property type="project" value="UniProtKB-UniRule"/>
</dbReference>
<dbReference type="CDD" id="cd00364">
    <property type="entry name" value="Ribosomal_uS17"/>
    <property type="match status" value="1"/>
</dbReference>
<dbReference type="FunFam" id="2.40.50.140:FF:000014">
    <property type="entry name" value="30S ribosomal protein S17"/>
    <property type="match status" value="1"/>
</dbReference>
<dbReference type="Gene3D" id="2.40.50.140">
    <property type="entry name" value="Nucleic acid-binding proteins"/>
    <property type="match status" value="1"/>
</dbReference>
<dbReference type="HAMAP" id="MF_01345_B">
    <property type="entry name" value="Ribosomal_uS17_B"/>
    <property type="match status" value="1"/>
</dbReference>
<dbReference type="InterPro" id="IPR012340">
    <property type="entry name" value="NA-bd_OB-fold"/>
</dbReference>
<dbReference type="InterPro" id="IPR000266">
    <property type="entry name" value="Ribosomal_uS17"/>
</dbReference>
<dbReference type="InterPro" id="IPR019984">
    <property type="entry name" value="Ribosomal_uS17_bact/chlr"/>
</dbReference>
<dbReference type="InterPro" id="IPR019979">
    <property type="entry name" value="Ribosomal_uS17_CS"/>
</dbReference>
<dbReference type="NCBIfam" id="NF004123">
    <property type="entry name" value="PRK05610.1"/>
    <property type="match status" value="1"/>
</dbReference>
<dbReference type="NCBIfam" id="TIGR03635">
    <property type="entry name" value="uS17_bact"/>
    <property type="match status" value="1"/>
</dbReference>
<dbReference type="PANTHER" id="PTHR10744">
    <property type="entry name" value="40S RIBOSOMAL PROTEIN S11 FAMILY MEMBER"/>
    <property type="match status" value="1"/>
</dbReference>
<dbReference type="PANTHER" id="PTHR10744:SF1">
    <property type="entry name" value="SMALL RIBOSOMAL SUBUNIT PROTEIN US17M"/>
    <property type="match status" value="1"/>
</dbReference>
<dbReference type="Pfam" id="PF00366">
    <property type="entry name" value="Ribosomal_S17"/>
    <property type="match status" value="1"/>
</dbReference>
<dbReference type="PRINTS" id="PR00973">
    <property type="entry name" value="RIBOSOMALS17"/>
</dbReference>
<dbReference type="SUPFAM" id="SSF50249">
    <property type="entry name" value="Nucleic acid-binding proteins"/>
    <property type="match status" value="1"/>
</dbReference>
<dbReference type="PROSITE" id="PS00056">
    <property type="entry name" value="RIBOSOMAL_S17"/>
    <property type="match status" value="1"/>
</dbReference>
<organism>
    <name type="scientific">Photorhabdus laumondii subsp. laumondii (strain DSM 15139 / CIP 105565 / TT01)</name>
    <name type="common">Photorhabdus luminescens subsp. laumondii</name>
    <dbReference type="NCBI Taxonomy" id="243265"/>
    <lineage>
        <taxon>Bacteria</taxon>
        <taxon>Pseudomonadati</taxon>
        <taxon>Pseudomonadota</taxon>
        <taxon>Gammaproteobacteria</taxon>
        <taxon>Enterobacterales</taxon>
        <taxon>Morganellaceae</taxon>
        <taxon>Photorhabdus</taxon>
    </lineage>
</organism>
<sequence length="84" mass="9697">MTDKIRTLQGRVVSDKMEKSIVVAIERKVKHPLYGKFIKRTTKLHVHDENNECGIGDVVEIRETRPLSKTKSWTLVRVVEKAIL</sequence>
<feature type="chain" id="PRO_0000233533" description="Small ribosomal subunit protein uS17">
    <location>
        <begin position="1"/>
        <end position="84"/>
    </location>
</feature>
<proteinExistence type="inferred from homology"/>
<name>RS17_PHOLL</name>
<reference key="1">
    <citation type="journal article" date="2003" name="Nat. Biotechnol.">
        <title>The genome sequence of the entomopathogenic bacterium Photorhabdus luminescens.</title>
        <authorList>
            <person name="Duchaud E."/>
            <person name="Rusniok C."/>
            <person name="Frangeul L."/>
            <person name="Buchrieser C."/>
            <person name="Givaudan A."/>
            <person name="Taourit S."/>
            <person name="Bocs S."/>
            <person name="Boursaux-Eude C."/>
            <person name="Chandler M."/>
            <person name="Charles J.-F."/>
            <person name="Dassa E."/>
            <person name="Derose R."/>
            <person name="Derzelle S."/>
            <person name="Freyssinet G."/>
            <person name="Gaudriault S."/>
            <person name="Medigue C."/>
            <person name="Lanois A."/>
            <person name="Powell K."/>
            <person name="Siguier P."/>
            <person name="Vincent R."/>
            <person name="Wingate V."/>
            <person name="Zouine M."/>
            <person name="Glaser P."/>
            <person name="Boemare N."/>
            <person name="Danchin A."/>
            <person name="Kunst F."/>
        </authorList>
    </citation>
    <scope>NUCLEOTIDE SEQUENCE [LARGE SCALE GENOMIC DNA]</scope>
    <source>
        <strain>DSM 15139 / CIP 105565 / TT01</strain>
    </source>
</reference>